<keyword id="KW-0963">Cytoplasm</keyword>
<keyword id="KW-1185">Reference proteome</keyword>
<keyword id="KW-0704">Schiff base</keyword>
<keyword id="KW-0784">Thiamine biosynthesis</keyword>
<keyword id="KW-0808">Transferase</keyword>
<proteinExistence type="inferred from homology"/>
<reference key="1">
    <citation type="journal article" date="2004" name="Proc. Natl. Acad. Sci. U.S.A.">
        <title>Genome sequence of the enterobacterial phytopathogen Erwinia carotovora subsp. atroseptica and characterization of virulence factors.</title>
        <authorList>
            <person name="Bell K.S."/>
            <person name="Sebaihia M."/>
            <person name="Pritchard L."/>
            <person name="Holden M.T.G."/>
            <person name="Hyman L.J."/>
            <person name="Holeva M.C."/>
            <person name="Thomson N.R."/>
            <person name="Bentley S.D."/>
            <person name="Churcher L.J.C."/>
            <person name="Mungall K."/>
            <person name="Atkin R."/>
            <person name="Bason N."/>
            <person name="Brooks K."/>
            <person name="Chillingworth T."/>
            <person name="Clark K."/>
            <person name="Doggett J."/>
            <person name="Fraser A."/>
            <person name="Hance Z."/>
            <person name="Hauser H."/>
            <person name="Jagels K."/>
            <person name="Moule S."/>
            <person name="Norbertczak H."/>
            <person name="Ormond D."/>
            <person name="Price C."/>
            <person name="Quail M.A."/>
            <person name="Sanders M."/>
            <person name="Walker D."/>
            <person name="Whitehead S."/>
            <person name="Salmond G.P.C."/>
            <person name="Birch P.R.J."/>
            <person name="Parkhill J."/>
            <person name="Toth I.K."/>
        </authorList>
    </citation>
    <scope>NUCLEOTIDE SEQUENCE [LARGE SCALE GENOMIC DNA]</scope>
    <source>
        <strain>SCRI 1043 / ATCC BAA-672</strain>
    </source>
</reference>
<dbReference type="EC" id="2.8.1.10" evidence="1"/>
<dbReference type="EMBL" id="BX950851">
    <property type="protein sequence ID" value="CAG73148.1"/>
    <property type="molecule type" value="Genomic_DNA"/>
</dbReference>
<dbReference type="RefSeq" id="WP_011091866.1">
    <property type="nucleotide sequence ID" value="NC_004547.2"/>
</dbReference>
<dbReference type="SMR" id="Q6DAM4"/>
<dbReference type="STRING" id="218491.ECA0229"/>
<dbReference type="KEGG" id="eca:ECA0229"/>
<dbReference type="PATRIC" id="fig|218491.5.peg.230"/>
<dbReference type="eggNOG" id="COG2022">
    <property type="taxonomic scope" value="Bacteria"/>
</dbReference>
<dbReference type="HOGENOM" id="CLU_062233_1_0_6"/>
<dbReference type="OrthoDB" id="9805935at2"/>
<dbReference type="UniPathway" id="UPA00060"/>
<dbReference type="Proteomes" id="UP000007966">
    <property type="component" value="Chromosome"/>
</dbReference>
<dbReference type="GO" id="GO:0005737">
    <property type="term" value="C:cytoplasm"/>
    <property type="evidence" value="ECO:0007669"/>
    <property type="project" value="UniProtKB-SubCell"/>
</dbReference>
<dbReference type="GO" id="GO:1990107">
    <property type="term" value="F:thiazole synthase activity"/>
    <property type="evidence" value="ECO:0007669"/>
    <property type="project" value="UniProtKB-EC"/>
</dbReference>
<dbReference type="GO" id="GO:0009229">
    <property type="term" value="P:thiamine diphosphate biosynthetic process"/>
    <property type="evidence" value="ECO:0007669"/>
    <property type="project" value="UniProtKB-UniRule"/>
</dbReference>
<dbReference type="CDD" id="cd04728">
    <property type="entry name" value="ThiG"/>
    <property type="match status" value="1"/>
</dbReference>
<dbReference type="FunFam" id="3.20.20.70:FF:000049">
    <property type="entry name" value="Thiazole synthase"/>
    <property type="match status" value="1"/>
</dbReference>
<dbReference type="Gene3D" id="3.20.20.70">
    <property type="entry name" value="Aldolase class I"/>
    <property type="match status" value="1"/>
</dbReference>
<dbReference type="HAMAP" id="MF_00443">
    <property type="entry name" value="ThiG"/>
    <property type="match status" value="1"/>
</dbReference>
<dbReference type="InterPro" id="IPR013785">
    <property type="entry name" value="Aldolase_TIM"/>
</dbReference>
<dbReference type="InterPro" id="IPR033983">
    <property type="entry name" value="Thiazole_synthase_ThiG"/>
</dbReference>
<dbReference type="InterPro" id="IPR008867">
    <property type="entry name" value="ThiG"/>
</dbReference>
<dbReference type="PANTHER" id="PTHR34266">
    <property type="entry name" value="THIAZOLE SYNTHASE"/>
    <property type="match status" value="1"/>
</dbReference>
<dbReference type="PANTHER" id="PTHR34266:SF2">
    <property type="entry name" value="THIAZOLE SYNTHASE"/>
    <property type="match status" value="1"/>
</dbReference>
<dbReference type="Pfam" id="PF05690">
    <property type="entry name" value="ThiG"/>
    <property type="match status" value="1"/>
</dbReference>
<dbReference type="SUPFAM" id="SSF110399">
    <property type="entry name" value="ThiG-like"/>
    <property type="match status" value="1"/>
</dbReference>
<accession>Q6DAM4</accession>
<name>THIG_PECAS</name>
<sequence length="261" mass="27414">MLHIADTILTSRLLTGTGKFATPELMLAALEASGSQLVTMAMKRVDLNGGNDAILAPLRQLGIKLLPNTSGAKTADEAVFAARLAREALGTHWLKLEIHPDVKYLLPDPIETLKAAEQLVKEGFTVLPYCGADPVLCKRLEEVGCAAVMPLGAPIGSNQGLQTRDFLRIIIEQARIPVIVDAGIGAPSHAADALEMGADGVLVNTAIAVARDPVAMARAFRLAVNAGGLARQAGQGNKQFVASATSPLTGFLHQQTEGAER</sequence>
<organism>
    <name type="scientific">Pectobacterium atrosepticum (strain SCRI 1043 / ATCC BAA-672)</name>
    <name type="common">Erwinia carotovora subsp. atroseptica</name>
    <dbReference type="NCBI Taxonomy" id="218491"/>
    <lineage>
        <taxon>Bacteria</taxon>
        <taxon>Pseudomonadati</taxon>
        <taxon>Pseudomonadota</taxon>
        <taxon>Gammaproteobacteria</taxon>
        <taxon>Enterobacterales</taxon>
        <taxon>Pectobacteriaceae</taxon>
        <taxon>Pectobacterium</taxon>
    </lineage>
</organism>
<feature type="chain" id="PRO_0000162819" description="Thiazole synthase">
    <location>
        <begin position="1"/>
        <end position="261"/>
    </location>
</feature>
<feature type="active site" description="Schiff-base intermediate with DXP" evidence="1">
    <location>
        <position position="95"/>
    </location>
</feature>
<feature type="binding site" evidence="1">
    <location>
        <position position="156"/>
    </location>
    <ligand>
        <name>1-deoxy-D-xylulose 5-phosphate</name>
        <dbReference type="ChEBI" id="CHEBI:57792"/>
    </ligand>
</feature>
<feature type="binding site" evidence="1">
    <location>
        <begin position="182"/>
        <end position="183"/>
    </location>
    <ligand>
        <name>1-deoxy-D-xylulose 5-phosphate</name>
        <dbReference type="ChEBI" id="CHEBI:57792"/>
    </ligand>
</feature>
<feature type="binding site" evidence="1">
    <location>
        <begin position="204"/>
        <end position="205"/>
    </location>
    <ligand>
        <name>1-deoxy-D-xylulose 5-phosphate</name>
        <dbReference type="ChEBI" id="CHEBI:57792"/>
    </ligand>
</feature>
<comment type="function">
    <text evidence="1">Catalyzes the rearrangement of 1-deoxy-D-xylulose 5-phosphate (DXP) to produce the thiazole phosphate moiety of thiamine. Sulfur is provided by the thiocarboxylate moiety of the carrier protein ThiS. In vitro, sulfur can be provided by H(2)S.</text>
</comment>
<comment type="catalytic activity">
    <reaction evidence="1">
        <text>[ThiS sulfur-carrier protein]-C-terminal-Gly-aminoethanethioate + 2-iminoacetate + 1-deoxy-D-xylulose 5-phosphate = [ThiS sulfur-carrier protein]-C-terminal Gly-Gly + 2-[(2R,5Z)-2-carboxy-4-methylthiazol-5(2H)-ylidene]ethyl phosphate + 2 H2O + H(+)</text>
        <dbReference type="Rhea" id="RHEA:26297"/>
        <dbReference type="Rhea" id="RHEA-COMP:12909"/>
        <dbReference type="Rhea" id="RHEA-COMP:19908"/>
        <dbReference type="ChEBI" id="CHEBI:15377"/>
        <dbReference type="ChEBI" id="CHEBI:15378"/>
        <dbReference type="ChEBI" id="CHEBI:57792"/>
        <dbReference type="ChEBI" id="CHEBI:62899"/>
        <dbReference type="ChEBI" id="CHEBI:77846"/>
        <dbReference type="ChEBI" id="CHEBI:90778"/>
        <dbReference type="ChEBI" id="CHEBI:232372"/>
        <dbReference type="EC" id="2.8.1.10"/>
    </reaction>
</comment>
<comment type="pathway">
    <text evidence="1">Cofactor biosynthesis; thiamine diphosphate biosynthesis.</text>
</comment>
<comment type="subunit">
    <text evidence="1">Homotetramer. Forms heterodimers with either ThiH or ThiS.</text>
</comment>
<comment type="subcellular location">
    <subcellularLocation>
        <location evidence="1">Cytoplasm</location>
    </subcellularLocation>
</comment>
<comment type="similarity">
    <text evidence="1">Belongs to the ThiG family.</text>
</comment>
<evidence type="ECO:0000255" key="1">
    <source>
        <dbReference type="HAMAP-Rule" id="MF_00443"/>
    </source>
</evidence>
<gene>
    <name evidence="1" type="primary">thiG</name>
    <name type="ordered locus">ECA0229</name>
</gene>
<protein>
    <recommendedName>
        <fullName evidence="1">Thiazole synthase</fullName>
        <ecNumber evidence="1">2.8.1.10</ecNumber>
    </recommendedName>
</protein>